<keyword id="KW-0963">Cytoplasm</keyword>
<keyword id="KW-0324">Glycolysis</keyword>
<keyword id="KW-0456">Lyase</keyword>
<keyword id="KW-0460">Magnesium</keyword>
<keyword id="KW-0479">Metal-binding</keyword>
<keyword id="KW-1185">Reference proteome</keyword>
<keyword id="KW-0964">Secreted</keyword>
<dbReference type="EC" id="4.2.1.11" evidence="1"/>
<dbReference type="EMBL" id="AE000657">
    <property type="protein sequence ID" value="AAC06738.1"/>
    <property type="molecule type" value="Genomic_DNA"/>
</dbReference>
<dbReference type="PIR" id="F70343">
    <property type="entry name" value="F70343"/>
</dbReference>
<dbReference type="RefSeq" id="NP_213338.1">
    <property type="nucleotide sequence ID" value="NC_000918.1"/>
</dbReference>
<dbReference type="RefSeq" id="WP_010880276.1">
    <property type="nucleotide sequence ID" value="NC_000918.1"/>
</dbReference>
<dbReference type="SMR" id="O66778"/>
<dbReference type="FunCoup" id="O66778">
    <property type="interactions" value="399"/>
</dbReference>
<dbReference type="STRING" id="224324.aq_484"/>
<dbReference type="EnsemblBacteria" id="AAC06738">
    <property type="protein sequence ID" value="AAC06738"/>
    <property type="gene ID" value="aq_484"/>
</dbReference>
<dbReference type="KEGG" id="aae:aq_484"/>
<dbReference type="PATRIC" id="fig|224324.8.peg.398"/>
<dbReference type="eggNOG" id="COG0148">
    <property type="taxonomic scope" value="Bacteria"/>
</dbReference>
<dbReference type="HOGENOM" id="CLU_031223_2_1_0"/>
<dbReference type="InParanoid" id="O66778"/>
<dbReference type="OrthoDB" id="9804716at2"/>
<dbReference type="UniPathway" id="UPA00109">
    <property type="reaction ID" value="UER00187"/>
</dbReference>
<dbReference type="Proteomes" id="UP000000798">
    <property type="component" value="Chromosome"/>
</dbReference>
<dbReference type="GO" id="GO:0009986">
    <property type="term" value="C:cell surface"/>
    <property type="evidence" value="ECO:0007669"/>
    <property type="project" value="UniProtKB-SubCell"/>
</dbReference>
<dbReference type="GO" id="GO:0005576">
    <property type="term" value="C:extracellular region"/>
    <property type="evidence" value="ECO:0007669"/>
    <property type="project" value="UniProtKB-SubCell"/>
</dbReference>
<dbReference type="GO" id="GO:0000015">
    <property type="term" value="C:phosphopyruvate hydratase complex"/>
    <property type="evidence" value="ECO:0000318"/>
    <property type="project" value="GO_Central"/>
</dbReference>
<dbReference type="GO" id="GO:0000287">
    <property type="term" value="F:magnesium ion binding"/>
    <property type="evidence" value="ECO:0007669"/>
    <property type="project" value="UniProtKB-UniRule"/>
</dbReference>
<dbReference type="GO" id="GO:0004634">
    <property type="term" value="F:phosphopyruvate hydratase activity"/>
    <property type="evidence" value="ECO:0000318"/>
    <property type="project" value="GO_Central"/>
</dbReference>
<dbReference type="GO" id="GO:0006096">
    <property type="term" value="P:glycolytic process"/>
    <property type="evidence" value="ECO:0000318"/>
    <property type="project" value="GO_Central"/>
</dbReference>
<dbReference type="CDD" id="cd03313">
    <property type="entry name" value="enolase"/>
    <property type="match status" value="1"/>
</dbReference>
<dbReference type="FunFam" id="3.20.20.120:FF:000001">
    <property type="entry name" value="Enolase"/>
    <property type="match status" value="1"/>
</dbReference>
<dbReference type="FunFam" id="3.30.390.10:FF:000001">
    <property type="entry name" value="Enolase"/>
    <property type="match status" value="1"/>
</dbReference>
<dbReference type="Gene3D" id="3.20.20.120">
    <property type="entry name" value="Enolase-like C-terminal domain"/>
    <property type="match status" value="1"/>
</dbReference>
<dbReference type="Gene3D" id="3.30.390.10">
    <property type="entry name" value="Enolase-like, N-terminal domain"/>
    <property type="match status" value="1"/>
</dbReference>
<dbReference type="HAMAP" id="MF_00318">
    <property type="entry name" value="Enolase"/>
    <property type="match status" value="1"/>
</dbReference>
<dbReference type="InterPro" id="IPR000941">
    <property type="entry name" value="Enolase"/>
</dbReference>
<dbReference type="InterPro" id="IPR036849">
    <property type="entry name" value="Enolase-like_C_sf"/>
</dbReference>
<dbReference type="InterPro" id="IPR029017">
    <property type="entry name" value="Enolase-like_N"/>
</dbReference>
<dbReference type="InterPro" id="IPR020810">
    <property type="entry name" value="Enolase_C"/>
</dbReference>
<dbReference type="InterPro" id="IPR020809">
    <property type="entry name" value="Enolase_CS"/>
</dbReference>
<dbReference type="InterPro" id="IPR020811">
    <property type="entry name" value="Enolase_N"/>
</dbReference>
<dbReference type="NCBIfam" id="TIGR01060">
    <property type="entry name" value="eno"/>
    <property type="match status" value="1"/>
</dbReference>
<dbReference type="PANTHER" id="PTHR11902">
    <property type="entry name" value="ENOLASE"/>
    <property type="match status" value="1"/>
</dbReference>
<dbReference type="PANTHER" id="PTHR11902:SF1">
    <property type="entry name" value="ENOLASE"/>
    <property type="match status" value="1"/>
</dbReference>
<dbReference type="Pfam" id="PF00113">
    <property type="entry name" value="Enolase_C"/>
    <property type="match status" value="1"/>
</dbReference>
<dbReference type="Pfam" id="PF03952">
    <property type="entry name" value="Enolase_N"/>
    <property type="match status" value="1"/>
</dbReference>
<dbReference type="PIRSF" id="PIRSF001400">
    <property type="entry name" value="Enolase"/>
    <property type="match status" value="1"/>
</dbReference>
<dbReference type="PRINTS" id="PR00148">
    <property type="entry name" value="ENOLASE"/>
</dbReference>
<dbReference type="SFLD" id="SFLDS00001">
    <property type="entry name" value="Enolase"/>
    <property type="match status" value="1"/>
</dbReference>
<dbReference type="SFLD" id="SFLDF00002">
    <property type="entry name" value="enolase"/>
    <property type="match status" value="1"/>
</dbReference>
<dbReference type="SMART" id="SM01192">
    <property type="entry name" value="Enolase_C"/>
    <property type="match status" value="1"/>
</dbReference>
<dbReference type="SMART" id="SM01193">
    <property type="entry name" value="Enolase_N"/>
    <property type="match status" value="1"/>
</dbReference>
<dbReference type="SUPFAM" id="SSF51604">
    <property type="entry name" value="Enolase C-terminal domain-like"/>
    <property type="match status" value="1"/>
</dbReference>
<dbReference type="SUPFAM" id="SSF54826">
    <property type="entry name" value="Enolase N-terminal domain-like"/>
    <property type="match status" value="1"/>
</dbReference>
<dbReference type="PROSITE" id="PS00164">
    <property type="entry name" value="ENOLASE"/>
    <property type="match status" value="1"/>
</dbReference>
<protein>
    <recommendedName>
        <fullName evidence="1">Enolase</fullName>
        <ecNumber evidence="1">4.2.1.11</ecNumber>
    </recommendedName>
    <alternativeName>
        <fullName evidence="1">2-phospho-D-glycerate hydro-lyase</fullName>
    </alternativeName>
    <alternativeName>
        <fullName evidence="1">2-phosphoglycerate dehydratase</fullName>
    </alternativeName>
</protein>
<proteinExistence type="inferred from homology"/>
<evidence type="ECO:0000255" key="1">
    <source>
        <dbReference type="HAMAP-Rule" id="MF_00318"/>
    </source>
</evidence>
<accession>O66778</accession>
<sequence length="426" mass="46870">MSRIKRVHGREVLDSRGNPTVEVEVELESGALGRAIVPSGASTGEREALELRDGDPKRYLGKGVLKAVDNVNGVIAKALVGLEPYNQREIDQILIELDGTENKSKLGANAILGTSMAVARAAANELGIPLYEYLGGKFGYRLPVPLMNVINGGAHADNNLDIQEFMIVPVCGGAFREALRAGVETFHHLKKILKEKGYSTNVGDEGGFAPNLNSSEEALDILMQAIEKAGYKPGEDILLALDVASSEFYENGVYKFEGKERSAEEMIEFYEKLIQKYPIISIEDPMSENDWEGWKEITKRLGDKVQLVGDDLFTTNPKILRKGIEEGVANAILVKLNQIGTVSETLDTVMLAKERNYSAIISHRSGETEDTFISHLAVATNAGQIKTGSASRTDRIAKYNELLRIEERLGNGAVFWGREEFYRFTS</sequence>
<reference key="1">
    <citation type="journal article" date="1998" name="Nature">
        <title>The complete genome of the hyperthermophilic bacterium Aquifex aeolicus.</title>
        <authorList>
            <person name="Deckert G."/>
            <person name="Warren P.V."/>
            <person name="Gaasterland T."/>
            <person name="Young W.G."/>
            <person name="Lenox A.L."/>
            <person name="Graham D.E."/>
            <person name="Overbeek R."/>
            <person name="Snead M.A."/>
            <person name="Keller M."/>
            <person name="Aujay M."/>
            <person name="Huber R."/>
            <person name="Feldman R.A."/>
            <person name="Short J.M."/>
            <person name="Olsen G.J."/>
            <person name="Swanson R.V."/>
        </authorList>
    </citation>
    <scope>NUCLEOTIDE SEQUENCE [LARGE SCALE GENOMIC DNA]</scope>
    <source>
        <strain>VF5</strain>
    </source>
</reference>
<comment type="function">
    <text evidence="1">Catalyzes the reversible conversion of 2-phosphoglycerate (2-PG) into phosphoenolpyruvate (PEP). It is essential for the degradation of carbohydrates via glycolysis.</text>
</comment>
<comment type="catalytic activity">
    <reaction evidence="1">
        <text>(2R)-2-phosphoglycerate = phosphoenolpyruvate + H2O</text>
        <dbReference type="Rhea" id="RHEA:10164"/>
        <dbReference type="ChEBI" id="CHEBI:15377"/>
        <dbReference type="ChEBI" id="CHEBI:58289"/>
        <dbReference type="ChEBI" id="CHEBI:58702"/>
        <dbReference type="EC" id="4.2.1.11"/>
    </reaction>
</comment>
<comment type="cofactor">
    <cofactor evidence="1">
        <name>Mg(2+)</name>
        <dbReference type="ChEBI" id="CHEBI:18420"/>
    </cofactor>
    <text evidence="1">Binds a second Mg(2+) ion via substrate during catalysis.</text>
</comment>
<comment type="pathway">
    <text evidence="1">Carbohydrate degradation; glycolysis; pyruvate from D-glyceraldehyde 3-phosphate: step 4/5.</text>
</comment>
<comment type="subcellular location">
    <subcellularLocation>
        <location evidence="1">Cytoplasm</location>
    </subcellularLocation>
    <subcellularLocation>
        <location evidence="1">Secreted</location>
    </subcellularLocation>
    <subcellularLocation>
        <location evidence="1">Cell surface</location>
    </subcellularLocation>
    <text evidence="1">Fractions of enolase are present in both the cytoplasm and on the cell surface.</text>
</comment>
<comment type="similarity">
    <text evidence="1">Belongs to the enolase family.</text>
</comment>
<feature type="chain" id="PRO_0000133831" description="Enolase">
    <location>
        <begin position="1"/>
        <end position="426"/>
    </location>
</feature>
<feature type="active site" description="Proton donor" evidence="1">
    <location>
        <position position="205"/>
    </location>
</feature>
<feature type="active site" description="Proton acceptor" evidence="1">
    <location>
        <position position="335"/>
    </location>
</feature>
<feature type="binding site" evidence="1">
    <location>
        <position position="163"/>
    </location>
    <ligand>
        <name>(2R)-2-phosphoglycerate</name>
        <dbReference type="ChEBI" id="CHEBI:58289"/>
    </ligand>
</feature>
<feature type="binding site" evidence="1">
    <location>
        <position position="242"/>
    </location>
    <ligand>
        <name>Mg(2+)</name>
        <dbReference type="ChEBI" id="CHEBI:18420"/>
    </ligand>
</feature>
<feature type="binding site" evidence="1">
    <location>
        <position position="283"/>
    </location>
    <ligand>
        <name>Mg(2+)</name>
        <dbReference type="ChEBI" id="CHEBI:18420"/>
    </ligand>
</feature>
<feature type="binding site" evidence="1">
    <location>
        <position position="310"/>
    </location>
    <ligand>
        <name>Mg(2+)</name>
        <dbReference type="ChEBI" id="CHEBI:18420"/>
    </ligand>
</feature>
<feature type="binding site" evidence="1">
    <location>
        <position position="335"/>
    </location>
    <ligand>
        <name>(2R)-2-phosphoglycerate</name>
        <dbReference type="ChEBI" id="CHEBI:58289"/>
    </ligand>
</feature>
<feature type="binding site" evidence="1">
    <location>
        <position position="364"/>
    </location>
    <ligand>
        <name>(2R)-2-phosphoglycerate</name>
        <dbReference type="ChEBI" id="CHEBI:58289"/>
    </ligand>
</feature>
<feature type="binding site" evidence="1">
    <location>
        <position position="365"/>
    </location>
    <ligand>
        <name>(2R)-2-phosphoglycerate</name>
        <dbReference type="ChEBI" id="CHEBI:58289"/>
    </ligand>
</feature>
<feature type="binding site" evidence="1">
    <location>
        <position position="386"/>
    </location>
    <ligand>
        <name>(2R)-2-phosphoglycerate</name>
        <dbReference type="ChEBI" id="CHEBI:58289"/>
    </ligand>
</feature>
<name>ENO_AQUAE</name>
<organism>
    <name type="scientific">Aquifex aeolicus (strain VF5)</name>
    <dbReference type="NCBI Taxonomy" id="224324"/>
    <lineage>
        <taxon>Bacteria</taxon>
        <taxon>Pseudomonadati</taxon>
        <taxon>Aquificota</taxon>
        <taxon>Aquificia</taxon>
        <taxon>Aquificales</taxon>
        <taxon>Aquificaceae</taxon>
        <taxon>Aquifex</taxon>
    </lineage>
</organism>
<gene>
    <name evidence="1" type="primary">eno</name>
    <name type="ordered locus">aq_484</name>
</gene>